<name>YIDD_ECO57</name>
<comment type="function">
    <text evidence="1">Could be involved in insertion of integral membrane proteins into the membrane.</text>
</comment>
<comment type="subcellular location">
    <subcellularLocation>
        <location evidence="1">Cell inner membrane</location>
        <topology evidence="1">Peripheral membrane protein</topology>
        <orientation evidence="1">Cytoplasmic side</orientation>
    </subcellularLocation>
</comment>
<comment type="similarity">
    <text evidence="1">Belongs to the UPF0161 family.</text>
</comment>
<evidence type="ECO:0000255" key="1">
    <source>
        <dbReference type="HAMAP-Rule" id="MF_00386"/>
    </source>
</evidence>
<sequence length="85" mass="9380">MAPPLSPGSRVLIALIRVYQRLISPLLGPHCRFTPTCSSYGIEALRRFGVIKGSWLTVKRVLKCHPLHPGGDDPVPPGPFNTREH</sequence>
<feature type="chain" id="PRO_0000171823" description="Putative membrane protein insertion efficiency factor">
    <location>
        <begin position="1"/>
        <end position="85"/>
    </location>
</feature>
<dbReference type="EMBL" id="AE005174">
    <property type="status" value="NOT_ANNOTATED_CDS"/>
    <property type="molecule type" value="Genomic_DNA"/>
</dbReference>
<dbReference type="EMBL" id="BA000007">
    <property type="status" value="NOT_ANNOTATED_CDS"/>
    <property type="molecule type" value="Genomic_DNA"/>
</dbReference>
<dbReference type="RefSeq" id="WP_001303730.1">
    <property type="nucleotide sequence ID" value="NZ_VOAI01000011.1"/>
</dbReference>
<dbReference type="PATRIC" id="fig|83334.175.peg.448"/>
<dbReference type="Proteomes" id="UP000000558">
    <property type="component" value="Chromosome"/>
</dbReference>
<dbReference type="Proteomes" id="UP000002519">
    <property type="component" value="Chromosome"/>
</dbReference>
<dbReference type="GO" id="GO:0005886">
    <property type="term" value="C:plasma membrane"/>
    <property type="evidence" value="ECO:0007669"/>
    <property type="project" value="UniProtKB-SubCell"/>
</dbReference>
<dbReference type="HAMAP" id="MF_00386">
    <property type="entry name" value="UPF0161_YidD"/>
    <property type="match status" value="1"/>
</dbReference>
<dbReference type="InterPro" id="IPR002696">
    <property type="entry name" value="Membr_insert_effic_factor_YidD"/>
</dbReference>
<dbReference type="NCBIfam" id="TIGR00278">
    <property type="entry name" value="membrane protein insertion efficiency factor YidD"/>
    <property type="match status" value="1"/>
</dbReference>
<dbReference type="PANTHER" id="PTHR33383">
    <property type="entry name" value="MEMBRANE PROTEIN INSERTION EFFICIENCY FACTOR-RELATED"/>
    <property type="match status" value="1"/>
</dbReference>
<dbReference type="PANTHER" id="PTHR33383:SF1">
    <property type="entry name" value="MEMBRANE PROTEIN INSERTION EFFICIENCY FACTOR-RELATED"/>
    <property type="match status" value="1"/>
</dbReference>
<dbReference type="Pfam" id="PF01809">
    <property type="entry name" value="YidD"/>
    <property type="match status" value="1"/>
</dbReference>
<dbReference type="SMART" id="SM01234">
    <property type="entry name" value="Haemolytic"/>
    <property type="match status" value="1"/>
</dbReference>
<accession>P61468</accession>
<gene>
    <name evidence="1" type="primary">yidD</name>
    <name type="ordered locus">Z5195.1</name>
    <name type="ordered locus">ECs4639.1</name>
</gene>
<organism>
    <name type="scientific">Escherichia coli O157:H7</name>
    <dbReference type="NCBI Taxonomy" id="83334"/>
    <lineage>
        <taxon>Bacteria</taxon>
        <taxon>Pseudomonadati</taxon>
        <taxon>Pseudomonadota</taxon>
        <taxon>Gammaproteobacteria</taxon>
        <taxon>Enterobacterales</taxon>
        <taxon>Enterobacteriaceae</taxon>
        <taxon>Escherichia</taxon>
    </lineage>
</organism>
<proteinExistence type="inferred from homology"/>
<keyword id="KW-0997">Cell inner membrane</keyword>
<keyword id="KW-1003">Cell membrane</keyword>
<keyword id="KW-0472">Membrane</keyword>
<keyword id="KW-1185">Reference proteome</keyword>
<reference key="1">
    <citation type="journal article" date="2001" name="Nature">
        <title>Genome sequence of enterohaemorrhagic Escherichia coli O157:H7.</title>
        <authorList>
            <person name="Perna N.T."/>
            <person name="Plunkett G. III"/>
            <person name="Burland V."/>
            <person name="Mau B."/>
            <person name="Glasner J.D."/>
            <person name="Rose D.J."/>
            <person name="Mayhew G.F."/>
            <person name="Evans P.S."/>
            <person name="Gregor J."/>
            <person name="Kirkpatrick H.A."/>
            <person name="Posfai G."/>
            <person name="Hackett J."/>
            <person name="Klink S."/>
            <person name="Boutin A."/>
            <person name="Shao Y."/>
            <person name="Miller L."/>
            <person name="Grotbeck E.J."/>
            <person name="Davis N.W."/>
            <person name="Lim A."/>
            <person name="Dimalanta E.T."/>
            <person name="Potamousis K."/>
            <person name="Apodaca J."/>
            <person name="Anantharaman T.S."/>
            <person name="Lin J."/>
            <person name="Yen G."/>
            <person name="Schwartz D.C."/>
            <person name="Welch R.A."/>
            <person name="Blattner F.R."/>
        </authorList>
    </citation>
    <scope>NUCLEOTIDE SEQUENCE [LARGE SCALE GENOMIC DNA]</scope>
    <source>
        <strain>O157:H7 / EDL933 / ATCC 700927 / EHEC</strain>
    </source>
</reference>
<reference key="2">
    <citation type="journal article" date="2001" name="DNA Res.">
        <title>Complete genome sequence of enterohemorrhagic Escherichia coli O157:H7 and genomic comparison with a laboratory strain K-12.</title>
        <authorList>
            <person name="Hayashi T."/>
            <person name="Makino K."/>
            <person name="Ohnishi M."/>
            <person name="Kurokawa K."/>
            <person name="Ishii K."/>
            <person name="Yokoyama K."/>
            <person name="Han C.-G."/>
            <person name="Ohtsubo E."/>
            <person name="Nakayama K."/>
            <person name="Murata T."/>
            <person name="Tanaka M."/>
            <person name="Tobe T."/>
            <person name="Iida T."/>
            <person name="Takami H."/>
            <person name="Honda T."/>
            <person name="Sasakawa C."/>
            <person name="Ogasawara N."/>
            <person name="Yasunaga T."/>
            <person name="Kuhara S."/>
            <person name="Shiba T."/>
            <person name="Hattori M."/>
            <person name="Shinagawa H."/>
        </authorList>
    </citation>
    <scope>NUCLEOTIDE SEQUENCE [LARGE SCALE GENOMIC DNA]</scope>
    <source>
        <strain>O157:H7 / Sakai / RIMD 0509952 / EHEC</strain>
    </source>
</reference>
<protein>
    <recommendedName>
        <fullName evidence="1">Putative membrane protein insertion efficiency factor</fullName>
    </recommendedName>
</protein>